<accession>A1JQ46</accession>
<comment type="function">
    <text evidence="1">May act as a double-stranded DNA (dsDNA) mimic. Probably regulates the activity of a dsDNA-binding protein.</text>
</comment>
<comment type="similarity">
    <text evidence="1">Belongs to the putative dsDNA mimic protein family.</text>
</comment>
<gene>
    <name type="ordered locus">YE2228</name>
</gene>
<protein>
    <recommendedName>
        <fullName evidence="1">Putative double-stranded DNA mimic protein YE2228</fullName>
    </recommendedName>
</protein>
<organism>
    <name type="scientific">Yersinia enterocolitica serotype O:8 / biotype 1B (strain NCTC 13174 / 8081)</name>
    <dbReference type="NCBI Taxonomy" id="393305"/>
    <lineage>
        <taxon>Bacteria</taxon>
        <taxon>Pseudomonadati</taxon>
        <taxon>Pseudomonadota</taxon>
        <taxon>Gammaproteobacteria</taxon>
        <taxon>Enterobacterales</taxon>
        <taxon>Yersiniaceae</taxon>
        <taxon>Yersinia</taxon>
    </lineage>
</organism>
<reference key="1">
    <citation type="journal article" date="2006" name="PLoS Genet.">
        <title>The complete genome sequence and comparative genome analysis of the high pathogenicity Yersinia enterocolitica strain 8081.</title>
        <authorList>
            <person name="Thomson N.R."/>
            <person name="Howard S."/>
            <person name="Wren B.W."/>
            <person name="Holden M.T.G."/>
            <person name="Crossman L."/>
            <person name="Challis G.L."/>
            <person name="Churcher C."/>
            <person name="Mungall K."/>
            <person name="Brooks K."/>
            <person name="Chillingworth T."/>
            <person name="Feltwell T."/>
            <person name="Abdellah Z."/>
            <person name="Hauser H."/>
            <person name="Jagels K."/>
            <person name="Maddison M."/>
            <person name="Moule S."/>
            <person name="Sanders M."/>
            <person name="Whitehead S."/>
            <person name="Quail M.A."/>
            <person name="Dougan G."/>
            <person name="Parkhill J."/>
            <person name="Prentice M.B."/>
        </authorList>
    </citation>
    <scope>NUCLEOTIDE SEQUENCE [LARGE SCALE GENOMIC DNA]</scope>
    <source>
        <strain>NCTC 13174 / 8081</strain>
    </source>
</reference>
<sequence>MDLNNRLTEDETLEQAYDIFLELAGDNLDPADILLFNLQFEERGGAELFDPAEDWQEHVDFDVNPDFFAEVVIGLADSDGEEINDVFARVLLCREKDHKLCHILWKE</sequence>
<feature type="chain" id="PRO_1000044916" description="Putative double-stranded DNA mimic protein YE2228">
    <location>
        <begin position="1"/>
        <end position="107"/>
    </location>
</feature>
<dbReference type="EMBL" id="AM286415">
    <property type="protein sequence ID" value="CAL12295.1"/>
    <property type="molecule type" value="Genomic_DNA"/>
</dbReference>
<dbReference type="RefSeq" id="YP_001006465.1">
    <property type="nucleotide sequence ID" value="NC_008800.1"/>
</dbReference>
<dbReference type="SMR" id="A1JQ46"/>
<dbReference type="KEGG" id="yen:YE2228"/>
<dbReference type="PATRIC" id="fig|393305.7.peg.2395"/>
<dbReference type="eggNOG" id="COG3099">
    <property type="taxonomic scope" value="Bacteria"/>
</dbReference>
<dbReference type="HOGENOM" id="CLU_143392_0_0_6"/>
<dbReference type="OrthoDB" id="5677388at2"/>
<dbReference type="Proteomes" id="UP000000642">
    <property type="component" value="Chromosome"/>
</dbReference>
<dbReference type="Gene3D" id="3.10.450.140">
    <property type="entry name" value="dsDNA mimic, putative"/>
    <property type="match status" value="1"/>
</dbReference>
<dbReference type="HAMAP" id="MF_00680">
    <property type="entry name" value="Put_dsDNA_mimic"/>
    <property type="match status" value="1"/>
</dbReference>
<dbReference type="InterPro" id="IPR007376">
    <property type="entry name" value="dsDNA_mimic_put"/>
</dbReference>
<dbReference type="InterPro" id="IPR036763">
    <property type="entry name" value="Put_dsDNA_mimic_sf"/>
</dbReference>
<dbReference type="NCBIfam" id="NF003469">
    <property type="entry name" value="PRK05094.1"/>
    <property type="match status" value="1"/>
</dbReference>
<dbReference type="Pfam" id="PF04269">
    <property type="entry name" value="DUF440"/>
    <property type="match status" value="1"/>
</dbReference>
<dbReference type="PIRSF" id="PIRSF004916">
    <property type="entry name" value="UCP004916"/>
    <property type="match status" value="1"/>
</dbReference>
<dbReference type="SUPFAM" id="SSF102816">
    <property type="entry name" value="Putative dsDNA mimic"/>
    <property type="match status" value="1"/>
</dbReference>
<evidence type="ECO:0000255" key="1">
    <source>
        <dbReference type="HAMAP-Rule" id="MF_00680"/>
    </source>
</evidence>
<name>Y2228_YERE8</name>
<proteinExistence type="inferred from homology"/>